<feature type="chain" id="PRO_0000219685" description="Photosystem II reaction center protein L">
    <location>
        <begin position="1"/>
        <end position="38"/>
    </location>
</feature>
<feature type="transmembrane region" description="Helical" evidence="1">
    <location>
        <begin position="17"/>
        <end position="37"/>
    </location>
</feature>
<evidence type="ECO:0000255" key="1">
    <source>
        <dbReference type="HAMAP-Rule" id="MF_01317"/>
    </source>
</evidence>
<geneLocation type="chloroplast"/>
<organism>
    <name type="scientific">Bowenia serrulata</name>
    <name type="common">Byfield fern</name>
    <name type="synonym">Bowenia spectabilis var. serrulata</name>
    <dbReference type="NCBI Taxonomy" id="13365"/>
    <lineage>
        <taxon>Eukaryota</taxon>
        <taxon>Viridiplantae</taxon>
        <taxon>Streptophyta</taxon>
        <taxon>Embryophyta</taxon>
        <taxon>Tracheophyta</taxon>
        <taxon>Spermatophyta</taxon>
        <taxon>Cycadidae</taxon>
        <taxon>Cycadales</taxon>
        <taxon>Cycadaceae</taxon>
        <taxon>Bowenia</taxon>
    </lineage>
</organism>
<name>PSBL_BOWSE</name>
<protein>
    <recommendedName>
        <fullName evidence="1">Photosystem II reaction center protein L</fullName>
        <shortName evidence="1">PSII-L</shortName>
    </recommendedName>
</protein>
<proteinExistence type="inferred from homology"/>
<reference key="1">
    <citation type="journal article" date="2003" name="Mol. Phylogenet. Evol.">
        <title>Inference of higher-order relationships in the cycads from a large chloroplast data set.</title>
        <authorList>
            <person name="Rai H.S."/>
            <person name="O'Brien H.E."/>
            <person name="Reeves P.A."/>
            <person name="Olmstead R.G."/>
            <person name="Graham S.W."/>
        </authorList>
    </citation>
    <scope>NUCLEOTIDE SEQUENCE [GENOMIC DNA]</scope>
</reference>
<dbReference type="EMBL" id="AF469713">
    <property type="protein sequence ID" value="AAQ05222.1"/>
    <property type="molecule type" value="Genomic_DNA"/>
</dbReference>
<dbReference type="RefSeq" id="YP_009113554.1">
    <property type="nucleotide sequence ID" value="NC_026036.1"/>
</dbReference>
<dbReference type="SMR" id="Q71L82"/>
<dbReference type="GeneID" id="22831939"/>
<dbReference type="GO" id="GO:0009535">
    <property type="term" value="C:chloroplast thylakoid membrane"/>
    <property type="evidence" value="ECO:0007669"/>
    <property type="project" value="UniProtKB-SubCell"/>
</dbReference>
<dbReference type="GO" id="GO:0009539">
    <property type="term" value="C:photosystem II reaction center"/>
    <property type="evidence" value="ECO:0007669"/>
    <property type="project" value="InterPro"/>
</dbReference>
<dbReference type="GO" id="GO:0015979">
    <property type="term" value="P:photosynthesis"/>
    <property type="evidence" value="ECO:0007669"/>
    <property type="project" value="UniProtKB-UniRule"/>
</dbReference>
<dbReference type="HAMAP" id="MF_01317">
    <property type="entry name" value="PSII_PsbL"/>
    <property type="match status" value="1"/>
</dbReference>
<dbReference type="InterPro" id="IPR003372">
    <property type="entry name" value="PSII_PsbL"/>
</dbReference>
<dbReference type="InterPro" id="IPR037266">
    <property type="entry name" value="PSII_PsbL_sf"/>
</dbReference>
<dbReference type="Pfam" id="PF02419">
    <property type="entry name" value="PsbL"/>
    <property type="match status" value="1"/>
</dbReference>
<dbReference type="SUPFAM" id="SSF161017">
    <property type="entry name" value="Photosystem II reaction center protein L, PsbL"/>
    <property type="match status" value="1"/>
</dbReference>
<gene>
    <name evidence="1" type="primary">psbL</name>
</gene>
<keyword id="KW-0150">Chloroplast</keyword>
<keyword id="KW-0472">Membrane</keyword>
<keyword id="KW-0602">Photosynthesis</keyword>
<keyword id="KW-0604">Photosystem II</keyword>
<keyword id="KW-0934">Plastid</keyword>
<keyword id="KW-0674">Reaction center</keyword>
<keyword id="KW-0793">Thylakoid</keyword>
<keyword id="KW-0812">Transmembrane</keyword>
<keyword id="KW-1133">Transmembrane helix</keyword>
<sequence length="38" mass="4437">MTQSNPNEQNVELNRTSLYWGLLLIFVLAVLFSNYSFN</sequence>
<comment type="function">
    <text evidence="1">One of the components of the core complex of photosystem II (PSII). PSII is a light-driven water:plastoquinone oxidoreductase that uses light energy to abstract electrons from H(2)O, generating O(2) and a proton gradient subsequently used for ATP formation. It consists of a core antenna complex that captures photons, and an electron transfer chain that converts photonic excitation into a charge separation. This subunit is found at the monomer-monomer interface and is required for correct PSII assembly and/or dimerization.</text>
</comment>
<comment type="subunit">
    <text evidence="1">PSII is composed of 1 copy each of membrane proteins PsbA, PsbB, PsbC, PsbD, PsbE, PsbF, PsbH, PsbI, PsbJ, PsbK, PsbL, PsbM, PsbT, PsbX, PsbY, PsbZ, Psb30/Ycf12, at least 3 peripheral proteins of the oxygen-evolving complex and a large number of cofactors. It forms dimeric complexes.</text>
</comment>
<comment type="subcellular location">
    <subcellularLocation>
        <location evidence="1">Plastid</location>
        <location evidence="1">Chloroplast thylakoid membrane</location>
        <topology evidence="1">Single-pass membrane protein</topology>
    </subcellularLocation>
</comment>
<comment type="similarity">
    <text evidence="1">Belongs to the PsbL family.</text>
</comment>
<accession>Q71L82</accession>